<accession>P21783</accession>
<evidence type="ECO:0000250" key="1"/>
<evidence type="ECO:0000250" key="2">
    <source>
        <dbReference type="UniProtKB" id="A2RUV0"/>
    </source>
</evidence>
<evidence type="ECO:0000250" key="3">
    <source>
        <dbReference type="UniProtKB" id="P46531"/>
    </source>
</evidence>
<evidence type="ECO:0000250" key="4">
    <source>
        <dbReference type="UniProtKB" id="Q01705"/>
    </source>
</evidence>
<evidence type="ECO:0000250" key="5">
    <source>
        <dbReference type="UniProtKB" id="Q07008"/>
    </source>
</evidence>
<evidence type="ECO:0000255" key="6"/>
<evidence type="ECO:0000255" key="7">
    <source>
        <dbReference type="PROSITE-ProRule" id="PRU00076"/>
    </source>
</evidence>
<evidence type="ECO:0000256" key="8">
    <source>
        <dbReference type="SAM" id="MobiDB-lite"/>
    </source>
</evidence>
<evidence type="ECO:0000269" key="9">
    <source>
    </source>
</evidence>
<evidence type="ECO:0000305" key="10"/>
<proteinExistence type="evidence at protein level"/>
<comment type="function">
    <text evidence="4">Functions as a receptor for membrane-bound ligands Jagged-1 (JAG1), Jagged-2 (JAG2) and Delta-1 (DLL1) to regulate cell-fate determination. Upon ligand activation through the released notch intracellular domain (NICD) it forms a transcriptional activator complex with RBPJ/RBPSUH and activates genes of the enhancer of split locus. Affects the implementation of differentiation, proliferation and apoptotic programs. Involved in angiogenesis; negatively regulates endothelial cell proliferation and migration and angiogenic sprouting. Involved in the maturation of both CD4(+) and CD8(+) cells in the thymus. Important for follicular differentiation and possibly cell fate selection within the follicle. During cerebellar development, functions as a receptor for neuronal DNER and is involved in the differentiation of Bergmann glia. Represses neuronal and myogenic differentiation. May play an essential role in postimplantation development, probably in some aspect of cell specification and/or differentiation. May be involved in mesoderm development, somite formation and neurogenesis. Involved in determination of left/right symmetry by modulating the balance between motile and immotile (sensory) cilia at the left-right organiser (LRO) (By similarity).</text>
</comment>
<comment type="subunit">
    <text evidence="9">Forms a ternary complex with nrarp and rbpj/suh.</text>
</comment>
<comment type="subcellular location">
    <subcellularLocation>
        <location evidence="4">Cell membrane</location>
        <topology evidence="4">Single-pass type I membrane protein</topology>
    </subcellularLocation>
</comment>
<comment type="subcellular location">
    <molecule>Notch 1 intracellular domain</molecule>
    <subcellularLocation>
        <location evidence="4">Nucleus</location>
    </subcellularLocation>
    <text evidence="4">Following proteolytical processing NICD is translocated to the nucleus.</text>
</comment>
<comment type="developmental stage">
    <text>Expressed almost uniformly in early embryos.</text>
</comment>
<comment type="PTM">
    <text evidence="2">O-glycosylated on the EGF-like domains. Contains both O-linked fucose and O-linked glucose. O-linked glycosylation by galnt11 is involved in determination of left/right symmetry: glycosylation promotes activation of notch1, possibly by promoting cleavage by adam17, modulating the balance between motile and immotile (sensory) cilia at the left-right organiser (LRO) (By similarity).</text>
</comment>
<comment type="PTM">
    <text evidence="4">Synthesized in the endoplasmic reticulum as an inactive form which is proteolytically cleaved by a furin-like convertase in the trans-Golgi network before it reaches the plasma membrane to yield an active, ligand-accessible form. Cleavage results in a C-terminal fragment N(TM) and a N-terminal fragment N(EC). Following ligand binding, it is cleaved by adam17 to yield a membrane-associated intermediate fragment called notch extracellular truncation (NEXT). Following endocytosis, this fragment is then cleaved by presenilin dependent gamma-secretase to release a Notch-derived peptide containing the intracellular domain (NICD) from the membrane (By similarity).</text>
</comment>
<comment type="similarity">
    <text evidence="10">Belongs to the NOTCH family.</text>
</comment>
<name>NOTC1_XENLA</name>
<organism>
    <name type="scientific">Xenopus laevis</name>
    <name type="common">African clawed frog</name>
    <dbReference type="NCBI Taxonomy" id="8355"/>
    <lineage>
        <taxon>Eukaryota</taxon>
        <taxon>Metazoa</taxon>
        <taxon>Chordata</taxon>
        <taxon>Craniata</taxon>
        <taxon>Vertebrata</taxon>
        <taxon>Euteleostomi</taxon>
        <taxon>Amphibia</taxon>
        <taxon>Batrachia</taxon>
        <taxon>Anura</taxon>
        <taxon>Pipoidea</taxon>
        <taxon>Pipidae</taxon>
        <taxon>Xenopodinae</taxon>
        <taxon>Xenopus</taxon>
        <taxon>Xenopus</taxon>
    </lineage>
</organism>
<protein>
    <recommendedName>
        <fullName>Neurogenic locus notch homolog protein 1</fullName>
        <shortName>Notch 1</shortName>
        <shortName>xOTCH</shortName>
    </recommendedName>
    <component>
        <recommendedName>
            <fullName>Notch 1 extracellular truncation</fullName>
            <shortName>NEXT</shortName>
        </recommendedName>
    </component>
    <component>
        <recommendedName>
            <fullName>Notch 1 intracellular domain</fullName>
            <shortName>NICD</shortName>
        </recommendedName>
    </component>
</protein>
<keyword id="KW-0010">Activator</keyword>
<keyword id="KW-0037">Angiogenesis</keyword>
<keyword id="KW-0040">ANK repeat</keyword>
<keyword id="KW-0106">Calcium</keyword>
<keyword id="KW-1003">Cell membrane</keyword>
<keyword id="KW-0217">Developmental protein</keyword>
<keyword id="KW-0221">Differentiation</keyword>
<keyword id="KW-1015">Disulfide bond</keyword>
<keyword id="KW-0245">EGF-like domain</keyword>
<keyword id="KW-0325">Glycoprotein</keyword>
<keyword id="KW-0472">Membrane</keyword>
<keyword id="KW-0479">Metal-binding</keyword>
<keyword id="KW-0914">Notch signaling pathway</keyword>
<keyword id="KW-0539">Nucleus</keyword>
<keyword id="KW-0675">Receptor</keyword>
<keyword id="KW-1185">Reference proteome</keyword>
<keyword id="KW-0677">Repeat</keyword>
<keyword id="KW-0732">Signal</keyword>
<keyword id="KW-0804">Transcription</keyword>
<keyword id="KW-0805">Transcription regulation</keyword>
<keyword id="KW-0812">Transmembrane</keyword>
<keyword id="KW-1133">Transmembrane helix</keyword>
<reference key="1">
    <citation type="journal article" date="1990" name="Science">
        <title>Xotch, the Xenopus homolog of Drosophila notch.</title>
        <authorList>
            <person name="Coffman C."/>
            <person name="Harris W."/>
            <person name="Kintner C."/>
        </authorList>
    </citation>
    <scope>NUCLEOTIDE SEQUENCE [MRNA]</scope>
</reference>
<reference key="2">
    <citation type="submission" date="1996-06" db="EMBL/GenBank/DDBJ databases">
        <authorList>
            <person name="Kintner C."/>
        </authorList>
    </citation>
    <scope>SEQUENCE REVISION TO 1759-1782</scope>
</reference>
<reference key="3">
    <citation type="journal article" date="2001" name="Genes Dev.">
        <title>Nrarp is a novel intracellular component of the Notch signaling pathway.</title>
        <authorList>
            <person name="Lamar E."/>
            <person name="Deblandre G."/>
            <person name="Wettstein D."/>
            <person name="Gawantka V."/>
            <person name="Pollet N."/>
            <person name="Niehrs C."/>
            <person name="Kintner C."/>
        </authorList>
    </citation>
    <scope>SUBUNIT</scope>
</reference>
<feature type="signal peptide" evidence="6">
    <location>
        <begin position="1"/>
        <end position="19"/>
    </location>
</feature>
<feature type="chain" id="PRO_0000007709" description="Neurogenic locus notch homolog protein 1">
    <location>
        <begin position="20"/>
        <end position="2524"/>
    </location>
</feature>
<feature type="chain" id="PRO_0000425202" description="Notch 1 extracellular truncation" evidence="1">
    <location>
        <begin position="1715"/>
        <end position="2524"/>
    </location>
</feature>
<feature type="chain" id="PRO_0000425203" description="Notch 1 intracellular domain" evidence="1">
    <location>
        <begin position="1748"/>
        <end position="2524"/>
    </location>
</feature>
<feature type="topological domain" description="Extracellular" evidence="10">
    <location>
        <begin position="20"/>
        <end position="1729"/>
    </location>
</feature>
<feature type="transmembrane region" description="Helical" evidence="3">
    <location>
        <begin position="1730"/>
        <end position="1750"/>
    </location>
</feature>
<feature type="topological domain" description="Cytoplasmic" evidence="10">
    <location>
        <begin position="1751"/>
        <end position="2524"/>
    </location>
</feature>
<feature type="domain" description="EGF-like 1" evidence="7">
    <location>
        <begin position="20"/>
        <end position="57"/>
    </location>
</feature>
<feature type="domain" description="EGF-like 2" evidence="7">
    <location>
        <begin position="58"/>
        <end position="99"/>
    </location>
</feature>
<feature type="domain" description="EGF-like 3" evidence="7">
    <location>
        <begin position="102"/>
        <end position="140"/>
    </location>
</feature>
<feature type="domain" description="EGF-like 4" evidence="7">
    <location>
        <begin position="141"/>
        <end position="177"/>
    </location>
</feature>
<feature type="domain" description="EGF-like 5; calcium-binding" evidence="7">
    <location>
        <begin position="179"/>
        <end position="215"/>
    </location>
</feature>
<feature type="domain" description="EGF-like 6" evidence="7">
    <location>
        <begin position="217"/>
        <end position="254"/>
    </location>
</feature>
<feature type="domain" description="EGF-like 7; calcium-binding" evidence="7">
    <location>
        <begin position="256"/>
        <end position="292"/>
    </location>
</feature>
<feature type="domain" description="EGF-like 8; calcium-binding" evidence="7">
    <location>
        <begin position="294"/>
        <end position="332"/>
    </location>
</feature>
<feature type="domain" description="EGF-like 9; calcium-binding" evidence="7">
    <location>
        <begin position="334"/>
        <end position="370"/>
    </location>
</feature>
<feature type="domain" description="EGF-like 10" evidence="7">
    <location>
        <begin position="371"/>
        <end position="409"/>
    </location>
</feature>
<feature type="domain" description="EGF-like 11; calcium-binding" evidence="7">
    <location>
        <begin position="411"/>
        <end position="449"/>
    </location>
</feature>
<feature type="domain" description="EGF-like 12; calcium-binding" evidence="7">
    <location>
        <begin position="451"/>
        <end position="487"/>
    </location>
</feature>
<feature type="domain" description="EGF-like 13; calcium-binding" evidence="7">
    <location>
        <begin position="489"/>
        <end position="525"/>
    </location>
</feature>
<feature type="domain" description="EGF-like 14; calcium-binding" evidence="7">
    <location>
        <begin position="527"/>
        <end position="563"/>
    </location>
</feature>
<feature type="domain" description="EGF-like 15; calcium-binding" evidence="7">
    <location>
        <begin position="565"/>
        <end position="600"/>
    </location>
</feature>
<feature type="domain" description="EGF-like 16; calcium-binding" evidence="7">
    <location>
        <begin position="602"/>
        <end position="638"/>
    </location>
</feature>
<feature type="domain" description="EGF-like 17" evidence="7">
    <location>
        <begin position="640"/>
        <end position="675"/>
    </location>
</feature>
<feature type="domain" description="EGF-like 18; calcium-binding" evidence="7">
    <location>
        <begin position="677"/>
        <end position="713"/>
    </location>
</feature>
<feature type="domain" description="EGF-like 19; calcium-binding" evidence="7">
    <location>
        <begin position="715"/>
        <end position="750"/>
    </location>
</feature>
<feature type="domain" description="EGF-like 20; calcium-binding" evidence="7">
    <location>
        <begin position="752"/>
        <end position="788"/>
    </location>
</feature>
<feature type="domain" description="EGF-like 21; calcium-binding" evidence="7">
    <location>
        <begin position="790"/>
        <end position="826"/>
    </location>
</feature>
<feature type="domain" description="EGF-like 22" evidence="7">
    <location>
        <begin position="828"/>
        <end position="866"/>
    </location>
</feature>
<feature type="domain" description="EGF-like 23; calcium-binding" evidence="7">
    <location>
        <begin position="868"/>
        <end position="904"/>
    </location>
</feature>
<feature type="domain" description="EGF-like 24; calcium-binding" evidence="7">
    <location>
        <begin position="906"/>
        <end position="942"/>
    </location>
</feature>
<feature type="domain" description="EGF-like 25; calcium-binding" evidence="7">
    <location>
        <begin position="944"/>
        <end position="980"/>
    </location>
</feature>
<feature type="domain" description="EGF-like 26" evidence="7">
    <location>
        <begin position="982"/>
        <end position="1018"/>
    </location>
</feature>
<feature type="domain" description="EGF-like 27; calcium-binding" evidence="7">
    <location>
        <begin position="1020"/>
        <end position="1056"/>
    </location>
</feature>
<feature type="domain" description="EGF-like 28" evidence="7">
    <location>
        <begin position="1058"/>
        <end position="1094"/>
    </location>
</feature>
<feature type="domain" description="EGF-like 29" evidence="7">
    <location>
        <begin position="1096"/>
        <end position="1142"/>
    </location>
</feature>
<feature type="domain" description="EGF-like 30; calcium-binding" evidence="7">
    <location>
        <begin position="1144"/>
        <end position="1180"/>
    </location>
</feature>
<feature type="domain" description="EGF-like 31; calcium-binding" evidence="7">
    <location>
        <begin position="1182"/>
        <end position="1218"/>
    </location>
</feature>
<feature type="domain" description="EGF-like 32; calcium-binding" evidence="7">
    <location>
        <begin position="1220"/>
        <end position="1264"/>
    </location>
</feature>
<feature type="domain" description="EGF-like 33" evidence="7">
    <location>
        <begin position="1266"/>
        <end position="1304"/>
    </location>
</feature>
<feature type="domain" description="EGF-like 34" evidence="7">
    <location>
        <begin position="1306"/>
        <end position="1346"/>
    </location>
</feature>
<feature type="domain" description="EGF-like 35" evidence="7">
    <location>
        <begin position="1347"/>
        <end position="1383"/>
    </location>
</feature>
<feature type="domain" description="EGF-like 36" evidence="7">
    <location>
        <begin position="1386"/>
        <end position="1424"/>
    </location>
</feature>
<feature type="repeat" description="LNR 1">
    <location>
        <begin position="1447"/>
        <end position="1487"/>
    </location>
</feature>
<feature type="repeat" description="LNR 2">
    <location>
        <begin position="1488"/>
        <end position="1529"/>
    </location>
</feature>
<feature type="repeat" description="LNR 3">
    <location>
        <begin position="1530"/>
        <end position="1564"/>
    </location>
</feature>
<feature type="repeat" description="ANK 1">
    <location>
        <begin position="1876"/>
        <end position="1919"/>
    </location>
</feature>
<feature type="repeat" description="ANK 2">
    <location>
        <begin position="1924"/>
        <end position="1953"/>
    </location>
</feature>
<feature type="repeat" description="ANK 3">
    <location>
        <begin position="1957"/>
        <end position="1987"/>
    </location>
</feature>
<feature type="repeat" description="ANK 4">
    <location>
        <begin position="1991"/>
        <end position="2020"/>
    </location>
</feature>
<feature type="repeat" description="ANK 5">
    <location>
        <begin position="2024"/>
        <end position="2053"/>
    </location>
</feature>
<feature type="repeat" description="ANK 6">
    <location>
        <begin position="2057"/>
        <end position="2086"/>
    </location>
</feature>
<feature type="region of interest" description="Disordered" evidence="8">
    <location>
        <begin position="2144"/>
        <end position="2230"/>
    </location>
</feature>
<feature type="region of interest" description="Disordered" evidence="8">
    <location>
        <begin position="2369"/>
        <end position="2407"/>
    </location>
</feature>
<feature type="region of interest" description="Disordered" evidence="8">
    <location>
        <begin position="2451"/>
        <end position="2524"/>
    </location>
</feature>
<feature type="compositionally biased region" description="Polar residues" evidence="8">
    <location>
        <begin position="2180"/>
        <end position="2192"/>
    </location>
</feature>
<feature type="compositionally biased region" description="Polar residues" evidence="8">
    <location>
        <begin position="2208"/>
        <end position="2230"/>
    </location>
</feature>
<feature type="compositionally biased region" description="Low complexity" evidence="8">
    <location>
        <begin position="2369"/>
        <end position="2394"/>
    </location>
</feature>
<feature type="compositionally biased region" description="Polar residues" evidence="8">
    <location>
        <begin position="2395"/>
        <end position="2407"/>
    </location>
</feature>
<feature type="compositionally biased region" description="Polar residues" evidence="8">
    <location>
        <begin position="2451"/>
        <end position="2471"/>
    </location>
</feature>
<feature type="compositionally biased region" description="Low complexity" evidence="8">
    <location>
        <begin position="2481"/>
        <end position="2496"/>
    </location>
</feature>
<feature type="compositionally biased region" description="Polar residues" evidence="8">
    <location>
        <begin position="2497"/>
        <end position="2516"/>
    </location>
</feature>
<feature type="binding site" evidence="5">
    <location>
        <position position="431"/>
    </location>
    <ligand>
        <name>Ca(2+)</name>
        <dbReference type="ChEBI" id="CHEBI:29108"/>
        <label>1</label>
    </ligand>
</feature>
<feature type="binding site" evidence="5">
    <location>
        <position position="434"/>
    </location>
    <ligand>
        <name>Ca(2+)</name>
        <dbReference type="ChEBI" id="CHEBI:29108"/>
        <label>1</label>
    </ligand>
</feature>
<feature type="binding site" evidence="5">
    <location>
        <position position="451"/>
    </location>
    <ligand>
        <name>Ca(2+)</name>
        <dbReference type="ChEBI" id="CHEBI:29108"/>
        <label>2</label>
    </ligand>
</feature>
<feature type="binding site" evidence="5">
    <location>
        <position position="452"/>
    </location>
    <ligand>
        <name>Ca(2+)</name>
        <dbReference type="ChEBI" id="CHEBI:29108"/>
        <label>2</label>
    </ligand>
</feature>
<feature type="binding site" evidence="5">
    <location>
        <position position="454"/>
    </location>
    <ligand>
        <name>Ca(2+)</name>
        <dbReference type="ChEBI" id="CHEBI:29108"/>
        <label>2</label>
    </ligand>
</feature>
<feature type="binding site" evidence="5">
    <location>
        <position position="468"/>
    </location>
    <ligand>
        <name>Ca(2+)</name>
        <dbReference type="ChEBI" id="CHEBI:29108"/>
        <label>2</label>
    </ligand>
</feature>
<feature type="binding site" evidence="5">
    <location>
        <position position="469"/>
    </location>
    <ligand>
        <name>Ca(2+)</name>
        <dbReference type="ChEBI" id="CHEBI:29108"/>
        <label>2</label>
    </ligand>
</feature>
<feature type="binding site" evidence="5">
    <location>
        <position position="489"/>
    </location>
    <ligand>
        <name>Ca(2+)</name>
        <dbReference type="ChEBI" id="CHEBI:29108"/>
        <label>3</label>
    </ligand>
</feature>
<feature type="binding site" evidence="5">
    <location>
        <position position="490"/>
    </location>
    <ligand>
        <name>Ca(2+)</name>
        <dbReference type="ChEBI" id="CHEBI:29108"/>
        <label>3</label>
    </ligand>
</feature>
<feature type="binding site" evidence="5">
    <location>
        <position position="492"/>
    </location>
    <ligand>
        <name>Ca(2+)</name>
        <dbReference type="ChEBI" id="CHEBI:29108"/>
        <label>3</label>
    </ligand>
</feature>
<feature type="binding site" evidence="5">
    <location>
        <position position="506"/>
    </location>
    <ligand>
        <name>Ca(2+)</name>
        <dbReference type="ChEBI" id="CHEBI:29108"/>
        <label>3</label>
    </ligand>
</feature>
<feature type="binding site" evidence="5">
    <location>
        <position position="507"/>
    </location>
    <ligand>
        <name>Ca(2+)</name>
        <dbReference type="ChEBI" id="CHEBI:29108"/>
        <label>3</label>
    </ligand>
</feature>
<feature type="site" description="Cleavage; by furin-like protease" evidence="4">
    <location>
        <begin position="1657"/>
        <end position="1658"/>
    </location>
</feature>
<feature type="site" description="Cleavage; by adam17" evidence="4">
    <location>
        <begin position="1714"/>
        <end position="1715"/>
    </location>
</feature>
<feature type="glycosylation site" description="O-linked (Fuc...) threonine; alternate" evidence="4">
    <location>
        <position position="231"/>
    </location>
</feature>
<feature type="glycosylation site" description="O-linked (GalNAc...) threonine; alternate" evidence="4">
    <location>
        <position position="231"/>
    </location>
</feature>
<feature type="glycosylation site" description="O-linked (Glc...) serine" evidence="5">
    <location>
        <position position="434"/>
    </location>
</feature>
<feature type="glycosylation site" description="O-linked (Glc...) serine" evidence="5">
    <location>
        <position position="457"/>
    </location>
</feature>
<feature type="glycosylation site" description="N-linked (GlcNAc...) asparagine" evidence="6">
    <location>
        <position position="462"/>
    </location>
</feature>
<feature type="glycosylation site" description="O-linked (Fuc...) threonine" evidence="5">
    <location>
        <position position="465"/>
    </location>
</feature>
<feature type="glycosylation site" description="O-linked (Glc...) serine" evidence="5">
    <location>
        <position position="495"/>
    </location>
</feature>
<feature type="glycosylation site" description="N-linked (GlcNAc...) asparagine" evidence="6">
    <location>
        <position position="887"/>
    </location>
</feature>
<feature type="glycosylation site" description="N-linked (GlcNAc...) asparagine" evidence="6">
    <location>
        <position position="958"/>
    </location>
</feature>
<feature type="glycosylation site" description="N-linked (GlcNAc...) asparagine" evidence="6">
    <location>
        <position position="1178"/>
    </location>
</feature>
<feature type="glycosylation site" description="O-linked (Fuc...) threonine; alternate" evidence="4">
    <location>
        <position position="1400"/>
    </location>
</feature>
<feature type="glycosylation site" description="O-linked (GalNAc...) threonine; alternate" evidence="4">
    <location>
        <position position="1400"/>
    </location>
</feature>
<feature type="glycosylation site" description="N-linked (GlcNAc...) asparagine" evidence="6">
    <location>
        <position position="1487"/>
    </location>
</feature>
<feature type="glycosylation site" description="N-linked (GlcNAc...) asparagine" evidence="6">
    <location>
        <position position="1508"/>
    </location>
</feature>
<feature type="glycosylation site" description="N-linked (GlcNAc...) asparagine" evidence="6">
    <location>
        <position position="1584"/>
    </location>
</feature>
<feature type="disulfide bond" evidence="1">
    <location>
        <begin position="22"/>
        <end position="35"/>
    </location>
</feature>
<feature type="disulfide bond" evidence="1">
    <location>
        <begin position="29"/>
        <end position="45"/>
    </location>
</feature>
<feature type="disulfide bond" evidence="1">
    <location>
        <begin position="47"/>
        <end position="56"/>
    </location>
</feature>
<feature type="disulfide bond" evidence="1">
    <location>
        <begin position="62"/>
        <end position="74"/>
    </location>
</feature>
<feature type="disulfide bond" evidence="1">
    <location>
        <begin position="68"/>
        <end position="87"/>
    </location>
</feature>
<feature type="disulfide bond" evidence="1">
    <location>
        <begin position="89"/>
        <end position="98"/>
    </location>
</feature>
<feature type="disulfide bond" evidence="1">
    <location>
        <begin position="106"/>
        <end position="117"/>
    </location>
</feature>
<feature type="disulfide bond" evidence="1">
    <location>
        <begin position="111"/>
        <end position="128"/>
    </location>
</feature>
<feature type="disulfide bond" evidence="1">
    <location>
        <begin position="130"/>
        <end position="139"/>
    </location>
</feature>
<feature type="disulfide bond" evidence="1">
    <location>
        <begin position="145"/>
        <end position="156"/>
    </location>
</feature>
<feature type="disulfide bond" evidence="1">
    <location>
        <begin position="150"/>
        <end position="165"/>
    </location>
</feature>
<feature type="disulfide bond" evidence="1">
    <location>
        <begin position="167"/>
        <end position="176"/>
    </location>
</feature>
<feature type="disulfide bond" evidence="1">
    <location>
        <begin position="183"/>
        <end position="194"/>
    </location>
</feature>
<feature type="disulfide bond" evidence="1">
    <location>
        <begin position="188"/>
        <end position="203"/>
    </location>
</feature>
<feature type="disulfide bond" evidence="1">
    <location>
        <begin position="205"/>
        <end position="214"/>
    </location>
</feature>
<feature type="disulfide bond" evidence="1">
    <location>
        <begin position="221"/>
        <end position="232"/>
    </location>
</feature>
<feature type="disulfide bond" evidence="1">
    <location>
        <begin position="226"/>
        <end position="242"/>
    </location>
</feature>
<feature type="disulfide bond" evidence="1">
    <location>
        <begin position="244"/>
        <end position="253"/>
    </location>
</feature>
<feature type="disulfide bond" evidence="1">
    <location>
        <begin position="260"/>
        <end position="271"/>
    </location>
</feature>
<feature type="disulfide bond" evidence="1">
    <location>
        <begin position="265"/>
        <end position="280"/>
    </location>
</feature>
<feature type="disulfide bond" evidence="1">
    <location>
        <begin position="282"/>
        <end position="291"/>
    </location>
</feature>
<feature type="disulfide bond" evidence="1">
    <location>
        <begin position="298"/>
        <end position="311"/>
    </location>
</feature>
<feature type="disulfide bond" evidence="1">
    <location>
        <begin position="305"/>
        <end position="320"/>
    </location>
</feature>
<feature type="disulfide bond" evidence="1">
    <location>
        <begin position="322"/>
        <end position="331"/>
    </location>
</feature>
<feature type="disulfide bond" evidence="1">
    <location>
        <begin position="338"/>
        <end position="349"/>
    </location>
</feature>
<feature type="disulfide bond" evidence="1">
    <location>
        <begin position="343"/>
        <end position="358"/>
    </location>
</feature>
<feature type="disulfide bond" evidence="1">
    <location>
        <begin position="360"/>
        <end position="369"/>
    </location>
</feature>
<feature type="disulfide bond" evidence="1">
    <location>
        <begin position="375"/>
        <end position="386"/>
    </location>
</feature>
<feature type="disulfide bond" evidence="1">
    <location>
        <begin position="380"/>
        <end position="397"/>
    </location>
</feature>
<feature type="disulfide bond" evidence="1">
    <location>
        <begin position="399"/>
        <end position="408"/>
    </location>
</feature>
<feature type="disulfide bond" evidence="5">
    <location>
        <begin position="415"/>
        <end position="428"/>
    </location>
</feature>
<feature type="disulfide bond" evidence="5">
    <location>
        <begin position="422"/>
        <end position="437"/>
    </location>
</feature>
<feature type="disulfide bond" evidence="5">
    <location>
        <begin position="439"/>
        <end position="448"/>
    </location>
</feature>
<feature type="disulfide bond" evidence="5">
    <location>
        <begin position="455"/>
        <end position="466"/>
    </location>
</feature>
<feature type="disulfide bond" evidence="5">
    <location>
        <begin position="460"/>
        <end position="475"/>
    </location>
</feature>
<feature type="disulfide bond" evidence="5">
    <location>
        <begin position="477"/>
        <end position="486"/>
    </location>
</feature>
<feature type="disulfide bond" evidence="5">
    <location>
        <begin position="493"/>
        <end position="504"/>
    </location>
</feature>
<feature type="disulfide bond" evidence="5">
    <location>
        <begin position="498"/>
        <end position="513"/>
    </location>
</feature>
<feature type="disulfide bond" evidence="5">
    <location>
        <begin position="515"/>
        <end position="524"/>
    </location>
</feature>
<feature type="disulfide bond" evidence="1">
    <location>
        <begin position="531"/>
        <end position="542"/>
    </location>
</feature>
<feature type="disulfide bond" evidence="1">
    <location>
        <begin position="536"/>
        <end position="551"/>
    </location>
</feature>
<feature type="disulfide bond" evidence="1">
    <location>
        <begin position="553"/>
        <end position="562"/>
    </location>
</feature>
<feature type="disulfide bond" evidence="1">
    <location>
        <begin position="569"/>
        <end position="579"/>
    </location>
</feature>
<feature type="disulfide bond" evidence="1">
    <location>
        <begin position="574"/>
        <end position="588"/>
    </location>
</feature>
<feature type="disulfide bond" evidence="1">
    <location>
        <begin position="590"/>
        <end position="599"/>
    </location>
</feature>
<feature type="disulfide bond" evidence="1">
    <location>
        <begin position="606"/>
        <end position="617"/>
    </location>
</feature>
<feature type="disulfide bond" evidence="1">
    <location>
        <begin position="611"/>
        <end position="626"/>
    </location>
</feature>
<feature type="disulfide bond" evidence="1">
    <location>
        <begin position="628"/>
        <end position="637"/>
    </location>
</feature>
<feature type="disulfide bond" evidence="1">
    <location>
        <begin position="644"/>
        <end position="654"/>
    </location>
</feature>
<feature type="disulfide bond" evidence="1">
    <location>
        <begin position="649"/>
        <end position="663"/>
    </location>
</feature>
<feature type="disulfide bond" evidence="1">
    <location>
        <begin position="665"/>
        <end position="674"/>
    </location>
</feature>
<feature type="disulfide bond" evidence="1">
    <location>
        <begin position="681"/>
        <end position="692"/>
    </location>
</feature>
<feature type="disulfide bond" evidence="1">
    <location>
        <begin position="686"/>
        <end position="701"/>
    </location>
</feature>
<feature type="disulfide bond" evidence="1">
    <location>
        <begin position="703"/>
        <end position="712"/>
    </location>
</feature>
<feature type="disulfide bond" evidence="1">
    <location>
        <begin position="719"/>
        <end position="729"/>
    </location>
</feature>
<feature type="disulfide bond" evidence="1">
    <location>
        <begin position="724"/>
        <end position="738"/>
    </location>
</feature>
<feature type="disulfide bond" evidence="1">
    <location>
        <begin position="740"/>
        <end position="749"/>
    </location>
</feature>
<feature type="disulfide bond" evidence="1">
    <location>
        <begin position="756"/>
        <end position="767"/>
    </location>
</feature>
<feature type="disulfide bond" evidence="1">
    <location>
        <begin position="761"/>
        <end position="776"/>
    </location>
</feature>
<feature type="disulfide bond" evidence="1">
    <location>
        <begin position="778"/>
        <end position="787"/>
    </location>
</feature>
<feature type="disulfide bond" evidence="1">
    <location>
        <begin position="794"/>
        <end position="805"/>
    </location>
</feature>
<feature type="disulfide bond" evidence="1">
    <location>
        <begin position="799"/>
        <end position="814"/>
    </location>
</feature>
<feature type="disulfide bond" evidence="1">
    <location>
        <begin position="816"/>
        <end position="825"/>
    </location>
</feature>
<feature type="disulfide bond" evidence="1">
    <location>
        <begin position="832"/>
        <end position="843"/>
    </location>
</feature>
<feature type="disulfide bond" evidence="1">
    <location>
        <begin position="837"/>
        <end position="854"/>
    </location>
</feature>
<feature type="disulfide bond" evidence="1">
    <location>
        <begin position="856"/>
        <end position="865"/>
    </location>
</feature>
<feature type="disulfide bond" evidence="1">
    <location>
        <begin position="872"/>
        <end position="883"/>
    </location>
</feature>
<feature type="disulfide bond" evidence="1">
    <location>
        <begin position="877"/>
        <end position="892"/>
    </location>
</feature>
<feature type="disulfide bond" evidence="1">
    <location>
        <begin position="894"/>
        <end position="903"/>
    </location>
</feature>
<feature type="disulfide bond" evidence="1">
    <location>
        <begin position="910"/>
        <end position="921"/>
    </location>
</feature>
<feature type="disulfide bond" evidence="1">
    <location>
        <begin position="915"/>
        <end position="930"/>
    </location>
</feature>
<feature type="disulfide bond" evidence="1">
    <location>
        <begin position="932"/>
        <end position="941"/>
    </location>
</feature>
<feature type="disulfide bond" evidence="1">
    <location>
        <begin position="948"/>
        <end position="959"/>
    </location>
</feature>
<feature type="disulfide bond" evidence="1">
    <location>
        <begin position="953"/>
        <end position="968"/>
    </location>
</feature>
<feature type="disulfide bond" evidence="1">
    <location>
        <begin position="970"/>
        <end position="979"/>
    </location>
</feature>
<feature type="disulfide bond" evidence="1">
    <location>
        <begin position="986"/>
        <end position="997"/>
    </location>
</feature>
<feature type="disulfide bond" evidence="1">
    <location>
        <begin position="991"/>
        <end position="1006"/>
    </location>
</feature>
<feature type="disulfide bond" evidence="1">
    <location>
        <begin position="1008"/>
        <end position="1017"/>
    </location>
</feature>
<feature type="disulfide bond" evidence="1">
    <location>
        <begin position="1024"/>
        <end position="1035"/>
    </location>
</feature>
<feature type="disulfide bond" evidence="1">
    <location>
        <begin position="1029"/>
        <end position="1044"/>
    </location>
</feature>
<feature type="disulfide bond" evidence="1">
    <location>
        <begin position="1046"/>
        <end position="1055"/>
    </location>
</feature>
<feature type="disulfide bond" evidence="1">
    <location>
        <begin position="1062"/>
        <end position="1073"/>
    </location>
</feature>
<feature type="disulfide bond" evidence="1">
    <location>
        <begin position="1067"/>
        <end position="1082"/>
    </location>
</feature>
<feature type="disulfide bond" evidence="1">
    <location>
        <begin position="1084"/>
        <end position="1093"/>
    </location>
</feature>
<feature type="disulfide bond" evidence="1">
    <location>
        <begin position="1100"/>
        <end position="1121"/>
    </location>
</feature>
<feature type="disulfide bond" evidence="1">
    <location>
        <begin position="1115"/>
        <end position="1130"/>
    </location>
</feature>
<feature type="disulfide bond" evidence="1">
    <location>
        <begin position="1132"/>
        <end position="1141"/>
    </location>
</feature>
<feature type="disulfide bond" evidence="1">
    <location>
        <begin position="1148"/>
        <end position="1159"/>
    </location>
</feature>
<feature type="disulfide bond" evidence="1">
    <location>
        <begin position="1153"/>
        <end position="1168"/>
    </location>
</feature>
<feature type="disulfide bond" evidence="1">
    <location>
        <begin position="1170"/>
        <end position="1179"/>
    </location>
</feature>
<feature type="disulfide bond" evidence="1">
    <location>
        <begin position="1186"/>
        <end position="1197"/>
    </location>
</feature>
<feature type="disulfide bond" evidence="1">
    <location>
        <begin position="1191"/>
        <end position="1206"/>
    </location>
</feature>
<feature type="disulfide bond" evidence="1">
    <location>
        <begin position="1208"/>
        <end position="1217"/>
    </location>
</feature>
<feature type="disulfide bond" evidence="1">
    <location>
        <begin position="1224"/>
        <end position="1243"/>
    </location>
</feature>
<feature type="disulfide bond" evidence="1">
    <location>
        <begin position="1237"/>
        <end position="1252"/>
    </location>
</feature>
<feature type="disulfide bond" evidence="1">
    <location>
        <begin position="1254"/>
        <end position="1263"/>
    </location>
</feature>
<feature type="disulfide bond" evidence="1">
    <location>
        <begin position="1270"/>
        <end position="1283"/>
    </location>
</feature>
<feature type="disulfide bond" evidence="1">
    <location>
        <begin position="1275"/>
        <end position="1292"/>
    </location>
</feature>
<feature type="disulfide bond" evidence="1">
    <location>
        <begin position="1294"/>
        <end position="1303"/>
    </location>
</feature>
<feature type="disulfide bond" evidence="1">
    <location>
        <begin position="1310"/>
        <end position="1321"/>
    </location>
</feature>
<feature type="disulfide bond" evidence="1">
    <location>
        <begin position="1315"/>
        <end position="1333"/>
    </location>
</feature>
<feature type="disulfide bond" evidence="1">
    <location>
        <begin position="1335"/>
        <end position="1344"/>
    </location>
</feature>
<feature type="disulfide bond" evidence="1">
    <location>
        <begin position="1351"/>
        <end position="1362"/>
    </location>
</feature>
<feature type="disulfide bond" evidence="1">
    <location>
        <begin position="1356"/>
        <end position="1371"/>
    </location>
</feature>
<feature type="disulfide bond" evidence="1">
    <location>
        <begin position="1373"/>
        <end position="1382"/>
    </location>
</feature>
<feature type="disulfide bond" evidence="1">
    <location>
        <begin position="1390"/>
        <end position="1401"/>
    </location>
</feature>
<feature type="disulfide bond" evidence="1">
    <location>
        <begin position="1395"/>
        <end position="1412"/>
    </location>
</feature>
<feature type="disulfide bond" evidence="1">
    <location>
        <begin position="1414"/>
        <end position="1423"/>
    </location>
</feature>
<feature type="disulfide bond" evidence="1">
    <location>
        <begin position="1447"/>
        <end position="1470"/>
    </location>
</feature>
<feature type="disulfide bond" evidence="1">
    <location>
        <begin position="1452"/>
        <end position="1465"/>
    </location>
</feature>
<feature type="disulfide bond" evidence="1">
    <location>
        <begin position="1461"/>
        <end position="1477"/>
    </location>
</feature>
<feature type="disulfide bond" evidence="1">
    <location>
        <begin position="1488"/>
        <end position="1512"/>
    </location>
</feature>
<feature type="disulfide bond" evidence="1">
    <location>
        <begin position="1494"/>
        <end position="1507"/>
    </location>
</feature>
<feature type="disulfide bond" evidence="1">
    <location>
        <begin position="1503"/>
        <end position="1519"/>
    </location>
</feature>
<feature type="disulfide bond" evidence="1">
    <location>
        <begin position="1534"/>
        <end position="1547"/>
    </location>
</feature>
<feature type="disulfide bond" evidence="1">
    <location>
        <begin position="1543"/>
        <end position="1559"/>
    </location>
</feature>
<sequence length="2524" mass="275125">MDRIGLAVLLCSLPVLTQGLRCTQTAEMCLNGGRCEMTPGGTGVCLCGNLYFGERCQFPNPCTIKNQCMNFGTCEPVLQGNAIDFICHCPVGFTDKVCLTPVDNACVNNPCRNGGTCELLNSVTEYKCRCPPGWTGDSCQQADPCASNPCANGGKCLPFEIQYICKCPPGFHGATCKQDINECSQNPCKNGGQCINEFGSYRCTCQNRFTGRNCDEPYVPCNPSPCLNGGTCRQTDDTSYDCTCLPGFSGQNCEENIDDCPSNNCRNGGTCVDGVNTYNCQCPPDWTGQYCTEDVDECQLMPNACQNGGTCHNTYGGYNCVCVNGWTGEDCSENIDDCANAACHSGATCHDRVASFYCECPHGRTGLLCHLDNACISNPCNEGSNCDTNPVNGKAICTCPPGYTGPACNNDVDECSLGANPCEHGGRCTNTLGSFQCNCPQGYAGPRCEIDVNECLSNPCQNDSTCLDQIGEFQCICMPGYEGLYCETNIDECASNPCLHNGKCIDKINEFRCDCPTGFSGNLCQHDFDECTSTPCKNGAKCLDGPNSYTCQCTEGFTGRHCEQDINECIPDPCHYGTCKDGIATFTCLCRPGYTGRLCDNDINECLSKPCLNGGQCTDRENGYICTCPKGTTGVNCETKIDDCASNLCDNGKCIDKIDGYECTCEPGYTGKLCNININECDSNPCRNGGTCKDQINGFTCVCPDGYHDHMCLSEVNECNSNPCIHGACHDGVNGYKCDCEAGWSGSNCDINNNECESNPCMNGGTCKDMTGAYICTCKAGFSGPNCQTNINECSSNPCLNHGTCIDDVAGYKCNCMLPYTGAICEAVLAPCAGSPCKNGGRCKESEDFETFSCECPPGWQGQTCEIDMNECVNRPCRNGATCQNTNGSYKCNCKPGYTGRNCEMDIDDCQPNPCHNGGSCSDGINMFFCNCPAGFRGPKCEEDINECASNPCKNGANCTDCVNSYTCTCQPGFSGIHCESNTPDCTESSCFNGGTCIDGINTFTCQCPPGFTGSYCQHDINECDSKPCLNGGTCQDSYGTYKCTCPQGYTGLNCQNLVRWCDSSPCKNGGKCWQTNNFYRCECKSGWTGVYCDVPSVSCEVAAKQQGVDIVHLCRNSGMCVDTGNTHFCRCQAGYTGSYCEEQVDECSPNPCQNGATCTDYLGGYSCECVAGYHGVNCSEEINECLSHPCQNGGTCIDLINTYKCSCPRGTQGVHCEINVDDCTPFYDSFTLEPKCFNNGKCIDRVGGYNCICPPGFVGERCEGDVNECLSNPCDSRGTQNCIQLVNDYRCECRQGFTGRRCESVVDGCKGMPCRNGGTCAVASNTERGFICKCPPGFDGATCEYDSRTCSNLRCQNGGTCISVLTSSKCVCSEGYTGATCQYPVISPCASHPCYNGGTCQFFAEEPFFQCFCPKNFNGLFCHILDYEFPGGLGKNITPPDNDDICENEQCSELADNKVCNANCNNHACGWDGGDCSLNFNDPWKNCTQSLQCWKYFNDGKCDSQCNNTGCLYDGFDCQKVEVQCNPLYDQYCKDHFQDGHCDQGCNNAECEWDGLDCANMPENLAEGTLVLVVLMPPERLKNNSVNFLRELSRVLHTNVVFKKDSKGEYKIYPYYGNEEELKKHHIKRSTDYWSDAPSAIFSTMKESILLGRHRRELDEMEVRGSIVYLEIDNRQCYKSSSQCFNSATDVAAFLGALASLGSLDTLSYKIEAVKSENMETPKPSTLYPMLSMLVIPLLIIFVFMMVIVNKKRRREHGQLWFPDGFIPKEPSKKKRRDRLGEDSVGLKPIKNMTDGSFMDDNQNEWGDEETLENKRFRFEEQVILPELVDDKTDPRQWTRQHLDAADLRISSMAPTPPQGEIEADCMDVNVRGPDGFTPLMIASCSGGGLETGNSEEEEDASANMISDFIGQGAQLHNQTDRTGETALHLAARYARADAAKRLLESSADANVQDNMGRTPLHAAVAADAQGVFQILIRNRATDLDARMFDGTTPLILAARLAVEGMVEELINAHADVNAVDEFGKSALHWAAAVNNVDAAAVLLKNSANKDMQNNKEETSLFLAAREGSYETAKVLLDHYANRDITDHMDRLPRDIAQERMHHDIVHLLDEYNLVKSPTLHNGPLGATTLSPPICSPNGYMGNMKPSVQSKKARKPSIKGNGCKEAKELKARRKKSQDGKTTLLDSGSSGVLSPVDSLESTHGYLSDVSSPPLMTSPFQQSPSMPLNHLTSMPESQLGMNHINMATKQEMAAGSNRMAFDAMVPRLTHLNASSPNTIMSNGSMHFTVGGAPTMNSQCDWLARLQNGMVQNQYDPIRNGIQQGNAQQAQALQHGLMTSLHNGLPATTLSQMMTYQAMPNTRLANQPHLMQAQQMQQQQNLQLHQSMQQQHHNSSTTSTHINSPFCSSDISQTDLQQMSSNNIHSVMPQDTQIFAASLPSNLTQSMTTAQFLTPPSQHSYSSPMDNTPSHQLQVPDHPFLTPSPESPDQWSSSSPHSNMSDWSEGISSPPTSMQPQRTHIPEAFK</sequence>
<gene>
    <name type="primary">notch1</name>
    <name type="synonym">xotch</name>
</gene>
<dbReference type="EMBL" id="M33874">
    <property type="protein sequence ID" value="AAB02039.1"/>
    <property type="molecule type" value="mRNA"/>
</dbReference>
<dbReference type="PIR" id="A35844">
    <property type="entry name" value="A35844"/>
</dbReference>
<dbReference type="RefSeq" id="NP_001081074.1">
    <property type="nucleotide sequence ID" value="NM_001087605.1"/>
</dbReference>
<dbReference type="SMR" id="P21783"/>
<dbReference type="GlyCosmos" id="P21783">
    <property type="glycosylation" value="13 sites, No reported glycans"/>
</dbReference>
<dbReference type="GeneID" id="394367"/>
<dbReference type="KEGG" id="xla:394367"/>
<dbReference type="AGR" id="Xenbase:XB-GENE-865261"/>
<dbReference type="CTD" id="394367"/>
<dbReference type="Xenbase" id="XB-GENE-865261">
    <property type="gene designation" value="notch1.S"/>
</dbReference>
<dbReference type="OrthoDB" id="283575at2759"/>
<dbReference type="Proteomes" id="UP000186698">
    <property type="component" value="Chromosome 8S"/>
</dbReference>
<dbReference type="Bgee" id="394367">
    <property type="expression patterns" value="Expressed in gastrula and 19 other cell types or tissues"/>
</dbReference>
<dbReference type="GO" id="GO:0009986">
    <property type="term" value="C:cell surface"/>
    <property type="evidence" value="ECO:0000318"/>
    <property type="project" value="GO_Central"/>
</dbReference>
<dbReference type="GO" id="GO:0005654">
    <property type="term" value="C:nucleoplasm"/>
    <property type="evidence" value="ECO:0000304"/>
    <property type="project" value="Reactome"/>
</dbReference>
<dbReference type="GO" id="GO:0005886">
    <property type="term" value="C:plasma membrane"/>
    <property type="evidence" value="ECO:0000318"/>
    <property type="project" value="GO_Central"/>
</dbReference>
<dbReference type="GO" id="GO:0043235">
    <property type="term" value="C:receptor complex"/>
    <property type="evidence" value="ECO:0000318"/>
    <property type="project" value="GO_Central"/>
</dbReference>
<dbReference type="GO" id="GO:0005509">
    <property type="term" value="F:calcium ion binding"/>
    <property type="evidence" value="ECO:0007669"/>
    <property type="project" value="InterPro"/>
</dbReference>
<dbReference type="GO" id="GO:0038023">
    <property type="term" value="F:signaling receptor activity"/>
    <property type="evidence" value="ECO:0007669"/>
    <property type="project" value="InterPro"/>
</dbReference>
<dbReference type="GO" id="GO:0001525">
    <property type="term" value="P:angiogenesis"/>
    <property type="evidence" value="ECO:0007669"/>
    <property type="project" value="UniProtKB-KW"/>
</dbReference>
<dbReference type="GO" id="GO:0007411">
    <property type="term" value="P:axon guidance"/>
    <property type="evidence" value="ECO:0007669"/>
    <property type="project" value="TreeGrafter"/>
</dbReference>
<dbReference type="GO" id="GO:0060271">
    <property type="term" value="P:cilium assembly"/>
    <property type="evidence" value="ECO:0000250"/>
    <property type="project" value="UniProtKB"/>
</dbReference>
<dbReference type="GO" id="GO:0000122">
    <property type="term" value="P:negative regulation of transcription by RNA polymerase II"/>
    <property type="evidence" value="ECO:0000314"/>
    <property type="project" value="UniProtKB"/>
</dbReference>
<dbReference type="GO" id="GO:0061314">
    <property type="term" value="P:Notch signaling involved in heart development"/>
    <property type="evidence" value="ECO:0000250"/>
    <property type="project" value="UniProtKB"/>
</dbReference>
<dbReference type="GO" id="GO:0007219">
    <property type="term" value="P:Notch signaling pathway"/>
    <property type="evidence" value="ECO:0000318"/>
    <property type="project" value="GO_Central"/>
</dbReference>
<dbReference type="GO" id="GO:0050793">
    <property type="term" value="P:regulation of developmental process"/>
    <property type="evidence" value="ECO:0007669"/>
    <property type="project" value="InterPro"/>
</dbReference>
<dbReference type="CDD" id="cd00054">
    <property type="entry name" value="EGF_CA"/>
    <property type="match status" value="32"/>
</dbReference>
<dbReference type="CDD" id="cd21702">
    <property type="entry name" value="JMTM_Notch1"/>
    <property type="match status" value="1"/>
</dbReference>
<dbReference type="FunFam" id="2.10.25.10:FF:000123">
    <property type="entry name" value="Crumbs homolog 1 (Drosophila)"/>
    <property type="match status" value="1"/>
</dbReference>
<dbReference type="FunFam" id="1.25.40.20:FF:000005">
    <property type="entry name" value="Neurogenic locus notch 1"/>
    <property type="match status" value="1"/>
</dbReference>
<dbReference type="FunFam" id="2.10.25.10:FF:000004">
    <property type="entry name" value="Neurogenic locus notch 1"/>
    <property type="match status" value="8"/>
</dbReference>
<dbReference type="FunFam" id="2.10.25.10:FF:000080">
    <property type="entry name" value="Neurogenic locus notch 1"/>
    <property type="match status" value="2"/>
</dbReference>
<dbReference type="FunFam" id="2.10.25.10:FF:000136">
    <property type="entry name" value="Neurogenic locus notch 1"/>
    <property type="match status" value="1"/>
</dbReference>
<dbReference type="FunFam" id="2.10.25.10:FF:000279">
    <property type="entry name" value="Neurogenic locus notch 1"/>
    <property type="match status" value="1"/>
</dbReference>
<dbReference type="FunFam" id="3.30.300.320:FF:000001">
    <property type="entry name" value="Neurogenic locus notch 1"/>
    <property type="match status" value="1"/>
</dbReference>
<dbReference type="FunFam" id="3.30.70.3310:FF:000003">
    <property type="entry name" value="Neurogenic locus notch 1"/>
    <property type="match status" value="1"/>
</dbReference>
<dbReference type="FunFam" id="2.10.25.10:FF:000558">
    <property type="entry name" value="Neurogenic locus notch homolog protein 1"/>
    <property type="match status" value="1"/>
</dbReference>
<dbReference type="FunFam" id="2.10.25.10:FF:000031">
    <property type="entry name" value="neurogenic locus notch homolog protein 3"/>
    <property type="match status" value="1"/>
</dbReference>
<dbReference type="FunFam" id="2.10.25.10:FF:000327">
    <property type="entry name" value="neurogenic locus notch homolog protein 4"/>
    <property type="match status" value="1"/>
</dbReference>
<dbReference type="FunFam" id="2.10.25.10:FF:000060">
    <property type="entry name" value="Neurogenic locus notch protein 1"/>
    <property type="match status" value="1"/>
</dbReference>
<dbReference type="FunFam" id="2.10.25.10:FF:000092">
    <property type="entry name" value="Neurogenic locus notch protein 1"/>
    <property type="match status" value="1"/>
</dbReference>
<dbReference type="FunFam" id="2.10.25.10:FF:000127">
    <property type="entry name" value="Neurogenic locus notch protein 1"/>
    <property type="match status" value="3"/>
</dbReference>
<dbReference type="FunFam" id="2.10.25.10:FF:000157">
    <property type="entry name" value="Neurogenic locus notch protein 1"/>
    <property type="match status" value="1"/>
</dbReference>
<dbReference type="FunFam" id="2.10.25.10:FF:000253">
    <property type="entry name" value="Neurogenic locus notch protein 1"/>
    <property type="match status" value="1"/>
</dbReference>
<dbReference type="FunFam" id="2.10.25.10:FF:000524">
    <property type="entry name" value="Neurogenic locus notch protein 1"/>
    <property type="match status" value="1"/>
</dbReference>
<dbReference type="FunFam" id="2.10.25.10:FF:000125">
    <property type="entry name" value="Neurogenic locus notch protein-like"/>
    <property type="match status" value="2"/>
</dbReference>
<dbReference type="FunFam" id="2.10.25.10:FF:000095">
    <property type="entry name" value="Notch, isoform B"/>
    <property type="match status" value="1"/>
</dbReference>
<dbReference type="FunFam" id="2.10.25.10:FF:000434">
    <property type="entry name" value="Predicted protein"/>
    <property type="match status" value="1"/>
</dbReference>
<dbReference type="FunFam" id="2.10.25.10:FF:000146">
    <property type="entry name" value="Putative neurogenic locus notch"/>
    <property type="match status" value="1"/>
</dbReference>
<dbReference type="FunFam" id="2.10.25.10:FF:000309">
    <property type="entry name" value="Uncharacterized protein, isoform A"/>
    <property type="match status" value="1"/>
</dbReference>
<dbReference type="FunFam" id="2.10.25.10:FF:000472">
    <property type="entry name" value="Uncharacterized protein, isoform A"/>
    <property type="match status" value="1"/>
</dbReference>
<dbReference type="Gene3D" id="3.30.300.320">
    <property type="match status" value="1"/>
</dbReference>
<dbReference type="Gene3D" id="3.30.70.3310">
    <property type="match status" value="1"/>
</dbReference>
<dbReference type="Gene3D" id="1.25.40.20">
    <property type="entry name" value="Ankyrin repeat-containing domain"/>
    <property type="match status" value="1"/>
</dbReference>
<dbReference type="Gene3D" id="2.10.25.10">
    <property type="entry name" value="Laminin"/>
    <property type="match status" value="35"/>
</dbReference>
<dbReference type="InterPro" id="IPR002110">
    <property type="entry name" value="Ankyrin_rpt"/>
</dbReference>
<dbReference type="InterPro" id="IPR036770">
    <property type="entry name" value="Ankyrin_rpt-contain_sf"/>
</dbReference>
<dbReference type="InterPro" id="IPR001881">
    <property type="entry name" value="EGF-like_Ca-bd_dom"/>
</dbReference>
<dbReference type="InterPro" id="IPR013032">
    <property type="entry name" value="EGF-like_CS"/>
</dbReference>
<dbReference type="InterPro" id="IPR000742">
    <property type="entry name" value="EGF-like_dom"/>
</dbReference>
<dbReference type="InterPro" id="IPR000152">
    <property type="entry name" value="EGF-type_Asp/Asn_hydroxyl_site"/>
</dbReference>
<dbReference type="InterPro" id="IPR018097">
    <property type="entry name" value="EGF_Ca-bd_CS"/>
</dbReference>
<dbReference type="InterPro" id="IPR009030">
    <property type="entry name" value="Growth_fac_rcpt_cys_sf"/>
</dbReference>
<dbReference type="InterPro" id="IPR008297">
    <property type="entry name" value="Notch"/>
</dbReference>
<dbReference type="InterPro" id="IPR035993">
    <property type="entry name" value="Notch-like_dom_sf"/>
</dbReference>
<dbReference type="InterPro" id="IPR051355">
    <property type="entry name" value="Notch/Slit_guidance"/>
</dbReference>
<dbReference type="InterPro" id="IPR049883">
    <property type="entry name" value="NOTCH1_EGF-like"/>
</dbReference>
<dbReference type="InterPro" id="IPR022362">
    <property type="entry name" value="Notch_1"/>
</dbReference>
<dbReference type="InterPro" id="IPR024600">
    <property type="entry name" value="Notch_C"/>
</dbReference>
<dbReference type="InterPro" id="IPR000800">
    <property type="entry name" value="Notch_dom"/>
</dbReference>
<dbReference type="InterPro" id="IPR010660">
    <property type="entry name" value="Notch_NOD_dom"/>
</dbReference>
<dbReference type="InterPro" id="IPR011656">
    <property type="entry name" value="Notch_NODP_dom"/>
</dbReference>
<dbReference type="PANTHER" id="PTHR45836:SF23">
    <property type="entry name" value="NEUROGENIC LOCUS NOTCH HOMOLOG PROTEIN 1"/>
    <property type="match status" value="1"/>
</dbReference>
<dbReference type="PANTHER" id="PTHR45836">
    <property type="entry name" value="SLIT HOMOLOG"/>
    <property type="match status" value="1"/>
</dbReference>
<dbReference type="Pfam" id="PF12796">
    <property type="entry name" value="Ank_2"/>
    <property type="match status" value="2"/>
</dbReference>
<dbReference type="Pfam" id="PF00008">
    <property type="entry name" value="EGF"/>
    <property type="match status" value="26"/>
</dbReference>
<dbReference type="Pfam" id="PF07645">
    <property type="entry name" value="EGF_CA"/>
    <property type="match status" value="3"/>
</dbReference>
<dbReference type="Pfam" id="PF12661">
    <property type="entry name" value="hEGF"/>
    <property type="match status" value="4"/>
</dbReference>
<dbReference type="Pfam" id="PF06816">
    <property type="entry name" value="NOD"/>
    <property type="match status" value="1"/>
</dbReference>
<dbReference type="Pfam" id="PF07684">
    <property type="entry name" value="NODP"/>
    <property type="match status" value="1"/>
</dbReference>
<dbReference type="Pfam" id="PF00066">
    <property type="entry name" value="Notch"/>
    <property type="match status" value="3"/>
</dbReference>
<dbReference type="PIRSF" id="PIRSF002279">
    <property type="entry name" value="Notch"/>
    <property type="match status" value="1"/>
</dbReference>
<dbReference type="PRINTS" id="PR00010">
    <property type="entry name" value="EGFBLOOD"/>
</dbReference>
<dbReference type="PRINTS" id="PR01452">
    <property type="entry name" value="LNOTCHREPEAT"/>
</dbReference>
<dbReference type="PRINTS" id="PR01983">
    <property type="entry name" value="NOTCH"/>
</dbReference>
<dbReference type="PRINTS" id="PR01984">
    <property type="entry name" value="NOTCH1"/>
</dbReference>
<dbReference type="SMART" id="SM00248">
    <property type="entry name" value="ANK"/>
    <property type="match status" value="6"/>
</dbReference>
<dbReference type="SMART" id="SM01334">
    <property type="entry name" value="DUF3454"/>
    <property type="match status" value="1"/>
</dbReference>
<dbReference type="SMART" id="SM00181">
    <property type="entry name" value="EGF"/>
    <property type="match status" value="36"/>
</dbReference>
<dbReference type="SMART" id="SM00179">
    <property type="entry name" value="EGF_CA"/>
    <property type="match status" value="32"/>
</dbReference>
<dbReference type="SMART" id="SM00004">
    <property type="entry name" value="NL"/>
    <property type="match status" value="3"/>
</dbReference>
<dbReference type="SMART" id="SM01338">
    <property type="entry name" value="NOD"/>
    <property type="match status" value="1"/>
</dbReference>
<dbReference type="SMART" id="SM01339">
    <property type="entry name" value="NODP"/>
    <property type="match status" value="1"/>
</dbReference>
<dbReference type="SUPFAM" id="SSF48403">
    <property type="entry name" value="Ankyrin repeat"/>
    <property type="match status" value="1"/>
</dbReference>
<dbReference type="SUPFAM" id="SSF57196">
    <property type="entry name" value="EGF/Laminin"/>
    <property type="match status" value="18"/>
</dbReference>
<dbReference type="SUPFAM" id="SSF57184">
    <property type="entry name" value="Growth factor receptor domain"/>
    <property type="match status" value="5"/>
</dbReference>
<dbReference type="SUPFAM" id="SSF90193">
    <property type="entry name" value="Notch domain"/>
    <property type="match status" value="3"/>
</dbReference>
<dbReference type="PROSITE" id="PS50297">
    <property type="entry name" value="ANK_REP_REGION"/>
    <property type="match status" value="1"/>
</dbReference>
<dbReference type="PROSITE" id="PS50088">
    <property type="entry name" value="ANK_REPEAT"/>
    <property type="match status" value="4"/>
</dbReference>
<dbReference type="PROSITE" id="PS00010">
    <property type="entry name" value="ASX_HYDROXYL"/>
    <property type="match status" value="23"/>
</dbReference>
<dbReference type="PROSITE" id="PS00022">
    <property type="entry name" value="EGF_1"/>
    <property type="match status" value="34"/>
</dbReference>
<dbReference type="PROSITE" id="PS01186">
    <property type="entry name" value="EGF_2"/>
    <property type="match status" value="29"/>
</dbReference>
<dbReference type="PROSITE" id="PS50026">
    <property type="entry name" value="EGF_3"/>
    <property type="match status" value="36"/>
</dbReference>
<dbReference type="PROSITE" id="PS01187">
    <property type="entry name" value="EGF_CA"/>
    <property type="match status" value="21"/>
</dbReference>
<dbReference type="PROSITE" id="PS50258">
    <property type="entry name" value="LNR"/>
    <property type="match status" value="3"/>
</dbReference>